<sequence>MEKANSFTKEQLIACGQGELLGANSPKLPIDNMLMVDRIVRINEDGGAFGKGEIIAELDINPTLWFFDCHFKGDPVMPGCLGLDAMWQLVGFYLGWEGAQGKGRALGVGEVKFTGQVLPDAKKVTYKLNIKRKIHRKLVMGIADATMEVDGREIYSATDLKVGIFSDTSTF</sequence>
<accession>Q12LD1</accession>
<gene>
    <name evidence="1" type="primary">fabA</name>
    <name type="ordered locus">Sden_2465</name>
</gene>
<proteinExistence type="inferred from homology"/>
<evidence type="ECO:0000255" key="1">
    <source>
        <dbReference type="HAMAP-Rule" id="MF_00405"/>
    </source>
</evidence>
<dbReference type="EC" id="4.2.1.59" evidence="1"/>
<dbReference type="EC" id="5.3.3.14" evidence="1"/>
<dbReference type="EMBL" id="CP000302">
    <property type="protein sequence ID" value="ABE55745.1"/>
    <property type="molecule type" value="Genomic_DNA"/>
</dbReference>
<dbReference type="RefSeq" id="WP_011496896.1">
    <property type="nucleotide sequence ID" value="NC_007954.1"/>
</dbReference>
<dbReference type="SMR" id="Q12LD1"/>
<dbReference type="STRING" id="318161.Sden_2465"/>
<dbReference type="KEGG" id="sdn:Sden_2465"/>
<dbReference type="eggNOG" id="COG0764">
    <property type="taxonomic scope" value="Bacteria"/>
</dbReference>
<dbReference type="HOGENOM" id="CLU_097925_0_0_6"/>
<dbReference type="OrthoDB" id="9786735at2"/>
<dbReference type="UniPathway" id="UPA00094"/>
<dbReference type="Proteomes" id="UP000001982">
    <property type="component" value="Chromosome"/>
</dbReference>
<dbReference type="GO" id="GO:0005737">
    <property type="term" value="C:cytoplasm"/>
    <property type="evidence" value="ECO:0007669"/>
    <property type="project" value="UniProtKB-SubCell"/>
</dbReference>
<dbReference type="GO" id="GO:0019171">
    <property type="term" value="F:(3R)-hydroxyacyl-[acyl-carrier-protein] dehydratase activity"/>
    <property type="evidence" value="ECO:0007669"/>
    <property type="project" value="UniProtKB-UniRule"/>
</dbReference>
<dbReference type="GO" id="GO:0034017">
    <property type="term" value="F:trans-2-decenoyl-acyl-carrier-protein isomerase activity"/>
    <property type="evidence" value="ECO:0007669"/>
    <property type="project" value="UniProtKB-UniRule"/>
</dbReference>
<dbReference type="GO" id="GO:0006636">
    <property type="term" value="P:unsaturated fatty acid biosynthetic process"/>
    <property type="evidence" value="ECO:0007669"/>
    <property type="project" value="UniProtKB-UniRule"/>
</dbReference>
<dbReference type="CDD" id="cd01287">
    <property type="entry name" value="FabA"/>
    <property type="match status" value="1"/>
</dbReference>
<dbReference type="Gene3D" id="3.10.129.10">
    <property type="entry name" value="Hotdog Thioesterase"/>
    <property type="match status" value="1"/>
</dbReference>
<dbReference type="HAMAP" id="MF_00405">
    <property type="entry name" value="FabA"/>
    <property type="match status" value="1"/>
</dbReference>
<dbReference type="InterPro" id="IPR010083">
    <property type="entry name" value="FabA"/>
</dbReference>
<dbReference type="InterPro" id="IPR013114">
    <property type="entry name" value="FabA_FabZ"/>
</dbReference>
<dbReference type="InterPro" id="IPR029069">
    <property type="entry name" value="HotDog_dom_sf"/>
</dbReference>
<dbReference type="NCBIfam" id="TIGR01749">
    <property type="entry name" value="fabA"/>
    <property type="match status" value="1"/>
</dbReference>
<dbReference type="NCBIfam" id="NF003509">
    <property type="entry name" value="PRK05174.1"/>
    <property type="match status" value="1"/>
</dbReference>
<dbReference type="PANTHER" id="PTHR30272">
    <property type="entry name" value="3-HYDROXYACYL-[ACYL-CARRIER-PROTEIN] DEHYDRATASE"/>
    <property type="match status" value="1"/>
</dbReference>
<dbReference type="PANTHER" id="PTHR30272:SF8">
    <property type="entry name" value="3-HYDROXYDECANOYL-[ACYL-CARRIER-PROTEIN] DEHYDRATASE"/>
    <property type="match status" value="1"/>
</dbReference>
<dbReference type="Pfam" id="PF07977">
    <property type="entry name" value="FabA"/>
    <property type="match status" value="1"/>
</dbReference>
<dbReference type="SUPFAM" id="SSF54637">
    <property type="entry name" value="Thioesterase/thiol ester dehydrase-isomerase"/>
    <property type="match status" value="1"/>
</dbReference>
<comment type="function">
    <text evidence="1">Necessary for the introduction of cis unsaturation into fatty acids. Catalyzes the dehydration of (3R)-3-hydroxydecanoyl-ACP to E-(2)-decenoyl-ACP and then its isomerization to Z-(3)-decenoyl-ACP. Can catalyze the dehydratase reaction for beta-hydroxyacyl-ACPs with saturated chain lengths up to 16:0, being most active on intermediate chain length.</text>
</comment>
<comment type="catalytic activity">
    <reaction evidence="1">
        <text>a (3R)-hydroxyacyl-[ACP] = a (2E)-enoyl-[ACP] + H2O</text>
        <dbReference type="Rhea" id="RHEA:13097"/>
        <dbReference type="Rhea" id="RHEA-COMP:9925"/>
        <dbReference type="Rhea" id="RHEA-COMP:9945"/>
        <dbReference type="ChEBI" id="CHEBI:15377"/>
        <dbReference type="ChEBI" id="CHEBI:78784"/>
        <dbReference type="ChEBI" id="CHEBI:78827"/>
        <dbReference type="EC" id="4.2.1.59"/>
    </reaction>
</comment>
<comment type="catalytic activity">
    <reaction evidence="1">
        <text>(3R)-hydroxydecanoyl-[ACP] = (2E)-decenoyl-[ACP] + H2O</text>
        <dbReference type="Rhea" id="RHEA:41860"/>
        <dbReference type="Rhea" id="RHEA-COMP:9638"/>
        <dbReference type="Rhea" id="RHEA-COMP:9639"/>
        <dbReference type="ChEBI" id="CHEBI:15377"/>
        <dbReference type="ChEBI" id="CHEBI:78466"/>
        <dbReference type="ChEBI" id="CHEBI:78467"/>
    </reaction>
</comment>
<comment type="catalytic activity">
    <reaction evidence="1">
        <text>(2E)-decenoyl-[ACP] = (3Z)-decenoyl-[ACP]</text>
        <dbReference type="Rhea" id="RHEA:23568"/>
        <dbReference type="Rhea" id="RHEA-COMP:9639"/>
        <dbReference type="Rhea" id="RHEA-COMP:9927"/>
        <dbReference type="ChEBI" id="CHEBI:78467"/>
        <dbReference type="ChEBI" id="CHEBI:78798"/>
        <dbReference type="EC" id="5.3.3.14"/>
    </reaction>
</comment>
<comment type="pathway">
    <text evidence="1">Lipid metabolism; fatty acid biosynthesis.</text>
</comment>
<comment type="subunit">
    <text evidence="1">Homodimer.</text>
</comment>
<comment type="subcellular location">
    <subcellularLocation>
        <location evidence="1">Cytoplasm</location>
    </subcellularLocation>
</comment>
<comment type="similarity">
    <text evidence="1">Belongs to the thioester dehydratase family. FabA subfamily.</text>
</comment>
<protein>
    <recommendedName>
        <fullName evidence="1">3-hydroxydecanoyl-[acyl-carrier-protein] dehydratase</fullName>
        <ecNumber evidence="1">4.2.1.59</ecNumber>
    </recommendedName>
    <alternativeName>
        <fullName evidence="1">3-hydroxyacyl-[acyl-carrier-protein] dehydratase FabA</fullName>
    </alternativeName>
    <alternativeName>
        <fullName evidence="1">Beta-hydroxydecanoyl thioester dehydrase</fullName>
    </alternativeName>
    <alternativeName>
        <fullName evidence="1">Trans-2-decenoyl-[acyl-carrier-protein] isomerase</fullName>
        <ecNumber evidence="1">5.3.3.14</ecNumber>
    </alternativeName>
</protein>
<organism>
    <name type="scientific">Shewanella denitrificans (strain OS217 / ATCC BAA-1090 / DSM 15013)</name>
    <dbReference type="NCBI Taxonomy" id="318161"/>
    <lineage>
        <taxon>Bacteria</taxon>
        <taxon>Pseudomonadati</taxon>
        <taxon>Pseudomonadota</taxon>
        <taxon>Gammaproteobacteria</taxon>
        <taxon>Alteromonadales</taxon>
        <taxon>Shewanellaceae</taxon>
        <taxon>Shewanella</taxon>
    </lineage>
</organism>
<name>FABA_SHEDO</name>
<feature type="chain" id="PRO_0000267750" description="3-hydroxydecanoyl-[acyl-carrier-protein] dehydratase">
    <location>
        <begin position="1"/>
        <end position="171"/>
    </location>
</feature>
<feature type="active site" evidence="1">
    <location>
        <position position="70"/>
    </location>
</feature>
<reference key="1">
    <citation type="submission" date="2006-03" db="EMBL/GenBank/DDBJ databases">
        <title>Complete sequence of Shewanella denitrificans OS217.</title>
        <authorList>
            <consortium name="US DOE Joint Genome Institute"/>
            <person name="Copeland A."/>
            <person name="Lucas S."/>
            <person name="Lapidus A."/>
            <person name="Barry K."/>
            <person name="Detter J.C."/>
            <person name="Glavina del Rio T."/>
            <person name="Hammon N."/>
            <person name="Israni S."/>
            <person name="Dalin E."/>
            <person name="Tice H."/>
            <person name="Pitluck S."/>
            <person name="Brettin T."/>
            <person name="Bruce D."/>
            <person name="Han C."/>
            <person name="Tapia R."/>
            <person name="Gilna P."/>
            <person name="Kiss H."/>
            <person name="Schmutz J."/>
            <person name="Larimer F."/>
            <person name="Land M."/>
            <person name="Hauser L."/>
            <person name="Kyrpides N."/>
            <person name="Lykidis A."/>
            <person name="Richardson P."/>
        </authorList>
    </citation>
    <scope>NUCLEOTIDE SEQUENCE [LARGE SCALE GENOMIC DNA]</scope>
    <source>
        <strain>OS217 / ATCC BAA-1090 / DSM 15013</strain>
    </source>
</reference>
<keyword id="KW-0963">Cytoplasm</keyword>
<keyword id="KW-0275">Fatty acid biosynthesis</keyword>
<keyword id="KW-0276">Fatty acid metabolism</keyword>
<keyword id="KW-0413">Isomerase</keyword>
<keyword id="KW-0444">Lipid biosynthesis</keyword>
<keyword id="KW-0443">Lipid metabolism</keyword>
<keyword id="KW-0456">Lyase</keyword>
<keyword id="KW-1185">Reference proteome</keyword>